<protein>
    <recommendedName>
        <fullName>Homeobox protein Hox-D3</fullName>
    </recommendedName>
    <alternativeName>
        <fullName>Homeobox protein R6</fullName>
    </alternativeName>
</protein>
<comment type="function">
    <text>Sequence-specific transcription factor which is part of a developmental regulatory system that provides cells with specific positional identities on the anterior-posterior axis.</text>
</comment>
<comment type="subcellular location">
    <subcellularLocation>
        <location>Nucleus</location>
    </subcellularLocation>
</comment>
<comment type="tissue specificity">
    <text>Predominantly spinal cord and kidney.</text>
</comment>
<comment type="similarity">
    <text evidence="3">Belongs to the Antp homeobox family.</text>
</comment>
<name>HXD3_RAT</name>
<keyword id="KW-0217">Developmental protein</keyword>
<keyword id="KW-0238">DNA-binding</keyword>
<keyword id="KW-0371">Homeobox</keyword>
<keyword id="KW-0539">Nucleus</keyword>
<keyword id="KW-1185">Reference proteome</keyword>
<keyword id="KW-0804">Transcription</keyword>
<keyword id="KW-0805">Transcription regulation</keyword>
<evidence type="ECO:0000255" key="1">
    <source>
        <dbReference type="PROSITE-ProRule" id="PRU00108"/>
    </source>
</evidence>
<evidence type="ECO:0000256" key="2">
    <source>
        <dbReference type="SAM" id="MobiDB-lite"/>
    </source>
</evidence>
<evidence type="ECO:0000305" key="3"/>
<gene>
    <name type="primary">Hoxd3</name>
    <name type="synonym">Hoxd-3</name>
</gene>
<reference key="1">
    <citation type="journal article" date="1988" name="Development">
        <title>The expression of rat homeobox-containing genes is developmentally regulated and tissue specific.</title>
        <authorList>
            <person name="Falzon M."/>
            <person name="Chung S.Y."/>
        </authorList>
    </citation>
    <scope>NUCLEOTIDE SEQUENCE [MRNA]</scope>
    <source>
        <strain>Sprague-Dawley</strain>
    </source>
</reference>
<dbReference type="EMBL" id="M37569">
    <property type="protein sequence ID" value="AAA41345.1"/>
    <property type="molecule type" value="mRNA"/>
</dbReference>
<dbReference type="PIR" id="E43559">
    <property type="entry name" value="E43559"/>
</dbReference>
<dbReference type="SMR" id="P18867"/>
<dbReference type="FunCoup" id="P18867">
    <property type="interactions" value="139"/>
</dbReference>
<dbReference type="STRING" id="10116.ENSRNOP00000034938"/>
<dbReference type="PaxDb" id="10116-ENSRNOP00000034938"/>
<dbReference type="UCSC" id="RGD:1588601">
    <property type="organism name" value="rat"/>
</dbReference>
<dbReference type="AGR" id="RGD:1588601"/>
<dbReference type="RGD" id="1588601">
    <property type="gene designation" value="Hoxd3"/>
</dbReference>
<dbReference type="eggNOG" id="KOG0489">
    <property type="taxonomic scope" value="Eukaryota"/>
</dbReference>
<dbReference type="InParanoid" id="P18867"/>
<dbReference type="Proteomes" id="UP000002494">
    <property type="component" value="Unplaced"/>
</dbReference>
<dbReference type="GO" id="GO:0005634">
    <property type="term" value="C:nucleus"/>
    <property type="evidence" value="ECO:0007669"/>
    <property type="project" value="UniProtKB-SubCell"/>
</dbReference>
<dbReference type="GO" id="GO:0001228">
    <property type="term" value="F:DNA-binding transcription activator activity, RNA polymerase II-specific"/>
    <property type="evidence" value="ECO:0000266"/>
    <property type="project" value="RGD"/>
</dbReference>
<dbReference type="GO" id="GO:0000977">
    <property type="term" value="F:RNA polymerase II transcription regulatory region sequence-specific DNA binding"/>
    <property type="evidence" value="ECO:0000266"/>
    <property type="project" value="RGD"/>
</dbReference>
<dbReference type="GO" id="GO:1990837">
    <property type="term" value="F:sequence-specific double-stranded DNA binding"/>
    <property type="evidence" value="ECO:0000266"/>
    <property type="project" value="RGD"/>
</dbReference>
<dbReference type="GO" id="GO:0009952">
    <property type="term" value="P:anterior/posterior pattern specification"/>
    <property type="evidence" value="ECO:0000266"/>
    <property type="project" value="RGD"/>
</dbReference>
<dbReference type="GO" id="GO:0051216">
    <property type="term" value="P:cartilage development"/>
    <property type="evidence" value="ECO:0000266"/>
    <property type="project" value="RGD"/>
</dbReference>
<dbReference type="GO" id="GO:0007160">
    <property type="term" value="P:cell-matrix adhesion"/>
    <property type="evidence" value="ECO:0000266"/>
    <property type="project" value="RGD"/>
</dbReference>
<dbReference type="GO" id="GO:0006351">
    <property type="term" value="P:DNA-templated transcription"/>
    <property type="evidence" value="ECO:0000266"/>
    <property type="project" value="RGD"/>
</dbReference>
<dbReference type="GO" id="GO:0048704">
    <property type="term" value="P:embryonic skeletal system morphogenesis"/>
    <property type="evidence" value="ECO:0000266"/>
    <property type="project" value="RGD"/>
</dbReference>
<dbReference type="GO" id="GO:0021615">
    <property type="term" value="P:glossopharyngeal nerve morphogenesis"/>
    <property type="evidence" value="ECO:0000266"/>
    <property type="project" value="RGD"/>
</dbReference>
<dbReference type="GO" id="GO:0007219">
    <property type="term" value="P:Notch signaling pathway"/>
    <property type="evidence" value="ECO:0000266"/>
    <property type="project" value="RGD"/>
</dbReference>
<dbReference type="GO" id="GO:0010628">
    <property type="term" value="P:positive regulation of gene expression"/>
    <property type="evidence" value="ECO:0000266"/>
    <property type="project" value="RGD"/>
</dbReference>
<dbReference type="GO" id="GO:0045666">
    <property type="term" value="P:positive regulation of neuron differentiation"/>
    <property type="evidence" value="ECO:0000266"/>
    <property type="project" value="RGD"/>
</dbReference>
<dbReference type="GO" id="GO:0045944">
    <property type="term" value="P:positive regulation of transcription by RNA polymerase II"/>
    <property type="evidence" value="ECO:0000266"/>
    <property type="project" value="RGD"/>
</dbReference>
<dbReference type="GO" id="GO:0030878">
    <property type="term" value="P:thyroid gland development"/>
    <property type="evidence" value="ECO:0000266"/>
    <property type="project" value="RGD"/>
</dbReference>
<dbReference type="CDD" id="cd00086">
    <property type="entry name" value="homeodomain"/>
    <property type="match status" value="1"/>
</dbReference>
<dbReference type="Gene3D" id="1.10.10.60">
    <property type="entry name" value="Homeodomain-like"/>
    <property type="match status" value="1"/>
</dbReference>
<dbReference type="InterPro" id="IPR001356">
    <property type="entry name" value="HD"/>
</dbReference>
<dbReference type="InterPro" id="IPR020479">
    <property type="entry name" value="HD_metazoa"/>
</dbReference>
<dbReference type="InterPro" id="IPR017970">
    <property type="entry name" value="Homeobox_CS"/>
</dbReference>
<dbReference type="InterPro" id="IPR009057">
    <property type="entry name" value="Homeodomain-like_sf"/>
</dbReference>
<dbReference type="PANTHER" id="PTHR45664:SF5">
    <property type="entry name" value="HOMEOBOX PROTEIN HOX-D3"/>
    <property type="match status" value="1"/>
</dbReference>
<dbReference type="PANTHER" id="PTHR45664">
    <property type="entry name" value="PROTEIN ZERKNUELLT 1-RELATED"/>
    <property type="match status" value="1"/>
</dbReference>
<dbReference type="Pfam" id="PF00046">
    <property type="entry name" value="Homeodomain"/>
    <property type="match status" value="1"/>
</dbReference>
<dbReference type="PRINTS" id="PR00024">
    <property type="entry name" value="HOMEOBOX"/>
</dbReference>
<dbReference type="SMART" id="SM00389">
    <property type="entry name" value="HOX"/>
    <property type="match status" value="1"/>
</dbReference>
<dbReference type="SUPFAM" id="SSF46689">
    <property type="entry name" value="Homeodomain-like"/>
    <property type="match status" value="1"/>
</dbReference>
<dbReference type="PROSITE" id="PS00027">
    <property type="entry name" value="HOMEOBOX_1"/>
    <property type="match status" value="1"/>
</dbReference>
<dbReference type="PROSITE" id="PS50071">
    <property type="entry name" value="HOMEOBOX_2"/>
    <property type="match status" value="1"/>
</dbReference>
<organism>
    <name type="scientific">Rattus norvegicus</name>
    <name type="common">Rat</name>
    <dbReference type="NCBI Taxonomy" id="10116"/>
    <lineage>
        <taxon>Eukaryota</taxon>
        <taxon>Metazoa</taxon>
        <taxon>Chordata</taxon>
        <taxon>Craniata</taxon>
        <taxon>Vertebrata</taxon>
        <taxon>Euteleostomi</taxon>
        <taxon>Mammalia</taxon>
        <taxon>Eutheria</taxon>
        <taxon>Euarchontoglires</taxon>
        <taxon>Glires</taxon>
        <taxon>Rodentia</taxon>
        <taxon>Myomorpha</taxon>
        <taxon>Muroidea</taxon>
        <taxon>Muridae</taxon>
        <taxon>Murinae</taxon>
        <taxon>Rattus</taxon>
    </lineage>
</organism>
<accession>P18867</accession>
<feature type="chain" id="PRO_0000200206" description="Homeobox protein Hox-D3">
    <location>
        <begin position="1" status="less than"/>
        <end position="114" status="greater than"/>
    </location>
</feature>
<feature type="DNA-binding region" description="Homeobox" evidence="1">
    <location>
        <begin position="11"/>
        <end position="70"/>
    </location>
</feature>
<feature type="region of interest" description="Disordered" evidence="2">
    <location>
        <begin position="70"/>
        <end position="93"/>
    </location>
</feature>
<feature type="non-terminal residue">
    <location>
        <position position="1"/>
    </location>
</feature>
<feature type="non-terminal residue">
    <location>
        <position position="114"/>
    </location>
</feature>
<sequence length="114" mass="13044">TGRTRAHRARHPRGCTAYTSAQLVELEKEFHFNRYLCRRRRVEMANLLNLTERQIKIWFQNRRMKYKKDQKAKGILHSPAGQSPERTPPLGGAAATCLLRPAAAVPAWPTTHPS</sequence>
<proteinExistence type="evidence at transcript level"/>